<accession>B4TWT5</accession>
<dbReference type="EMBL" id="CP001127">
    <property type="protein sequence ID" value="ACF88909.1"/>
    <property type="molecule type" value="Genomic_DNA"/>
</dbReference>
<dbReference type="RefSeq" id="WP_000610894.1">
    <property type="nucleotide sequence ID" value="NC_011094.1"/>
</dbReference>
<dbReference type="SMR" id="B4TWT5"/>
<dbReference type="GeneID" id="66754612"/>
<dbReference type="KEGG" id="sew:SeSA_A0100"/>
<dbReference type="HOGENOM" id="CLU_128074_0_0_6"/>
<dbReference type="Proteomes" id="UP000001865">
    <property type="component" value="Chromosome"/>
</dbReference>
<dbReference type="GO" id="GO:0070987">
    <property type="term" value="P:error-free translesion synthesis"/>
    <property type="evidence" value="ECO:0007669"/>
    <property type="project" value="TreeGrafter"/>
</dbReference>
<dbReference type="Gene3D" id="2.60.40.1470">
    <property type="entry name" value="ApaG domain"/>
    <property type="match status" value="1"/>
</dbReference>
<dbReference type="HAMAP" id="MF_00791">
    <property type="entry name" value="ApaG"/>
    <property type="match status" value="1"/>
</dbReference>
<dbReference type="InterPro" id="IPR007474">
    <property type="entry name" value="ApaG_domain"/>
</dbReference>
<dbReference type="InterPro" id="IPR036767">
    <property type="entry name" value="ApaG_sf"/>
</dbReference>
<dbReference type="InterPro" id="IPR023065">
    <property type="entry name" value="Uncharacterised_ApaG"/>
</dbReference>
<dbReference type="NCBIfam" id="NF003967">
    <property type="entry name" value="PRK05461.1"/>
    <property type="match status" value="1"/>
</dbReference>
<dbReference type="PANTHER" id="PTHR14289">
    <property type="entry name" value="F-BOX ONLY PROTEIN 3"/>
    <property type="match status" value="1"/>
</dbReference>
<dbReference type="PANTHER" id="PTHR14289:SF16">
    <property type="entry name" value="POLYMERASE DELTA-INTERACTING PROTEIN 2"/>
    <property type="match status" value="1"/>
</dbReference>
<dbReference type="Pfam" id="PF04379">
    <property type="entry name" value="DUF525"/>
    <property type="match status" value="1"/>
</dbReference>
<dbReference type="SUPFAM" id="SSF110069">
    <property type="entry name" value="ApaG-like"/>
    <property type="match status" value="1"/>
</dbReference>
<dbReference type="PROSITE" id="PS51087">
    <property type="entry name" value="APAG"/>
    <property type="match status" value="1"/>
</dbReference>
<evidence type="ECO:0000255" key="1">
    <source>
        <dbReference type="HAMAP-Rule" id="MF_00791"/>
    </source>
</evidence>
<name>APAG_SALSV</name>
<sequence length="125" mass="13924">MINSPRVCIQVQSVYIEAQSSPDDERYVFAYTVTIRNLGRAPVQLLGRYWLITNGHGRETEVQGEGVVGVQPRIAPGEEYQYTSGAVIETPLGTMQGHYEMIDENGDAFTIDIPVFRLAVPTLIH</sequence>
<reference key="1">
    <citation type="journal article" date="2011" name="J. Bacteriol.">
        <title>Comparative genomics of 28 Salmonella enterica isolates: evidence for CRISPR-mediated adaptive sublineage evolution.</title>
        <authorList>
            <person name="Fricke W.F."/>
            <person name="Mammel M.K."/>
            <person name="McDermott P.F."/>
            <person name="Tartera C."/>
            <person name="White D.G."/>
            <person name="Leclerc J.E."/>
            <person name="Ravel J."/>
            <person name="Cebula T.A."/>
        </authorList>
    </citation>
    <scope>NUCLEOTIDE SEQUENCE [LARGE SCALE GENOMIC DNA]</scope>
    <source>
        <strain>CVM19633</strain>
    </source>
</reference>
<proteinExistence type="inferred from homology"/>
<protein>
    <recommendedName>
        <fullName evidence="1">Protein ApaG</fullName>
    </recommendedName>
</protein>
<feature type="chain" id="PRO_1000133814" description="Protein ApaG">
    <location>
        <begin position="1"/>
        <end position="125"/>
    </location>
</feature>
<feature type="domain" description="ApaG" evidence="1">
    <location>
        <begin position="1"/>
        <end position="125"/>
    </location>
</feature>
<organism>
    <name type="scientific">Salmonella schwarzengrund (strain CVM19633)</name>
    <dbReference type="NCBI Taxonomy" id="439843"/>
    <lineage>
        <taxon>Bacteria</taxon>
        <taxon>Pseudomonadati</taxon>
        <taxon>Pseudomonadota</taxon>
        <taxon>Gammaproteobacteria</taxon>
        <taxon>Enterobacterales</taxon>
        <taxon>Enterobacteriaceae</taxon>
        <taxon>Salmonella</taxon>
    </lineage>
</organism>
<gene>
    <name evidence="1" type="primary">apaG</name>
    <name type="ordered locus">SeSA_A0100</name>
</gene>